<reference key="1">
    <citation type="journal article" date="2002" name="Proc. Natl. Acad. Sci. U.S.A.">
        <title>The Brucella suis genome reveals fundamental similarities between animal and plant pathogens and symbionts.</title>
        <authorList>
            <person name="Paulsen I.T."/>
            <person name="Seshadri R."/>
            <person name="Nelson K.E."/>
            <person name="Eisen J.A."/>
            <person name="Heidelberg J.F."/>
            <person name="Read T.D."/>
            <person name="Dodson R.J."/>
            <person name="Umayam L.A."/>
            <person name="Brinkac L.M."/>
            <person name="Beanan M.J."/>
            <person name="Daugherty S.C."/>
            <person name="DeBoy R.T."/>
            <person name="Durkin A.S."/>
            <person name="Kolonay J.F."/>
            <person name="Madupu R."/>
            <person name="Nelson W.C."/>
            <person name="Ayodeji B."/>
            <person name="Kraul M."/>
            <person name="Shetty J."/>
            <person name="Malek J.A."/>
            <person name="Van Aken S.E."/>
            <person name="Riedmuller S."/>
            <person name="Tettelin H."/>
            <person name="Gill S.R."/>
            <person name="White O."/>
            <person name="Salzberg S.L."/>
            <person name="Hoover D.L."/>
            <person name="Lindler L.E."/>
            <person name="Halling S.M."/>
            <person name="Boyle S.M."/>
            <person name="Fraser C.M."/>
        </authorList>
    </citation>
    <scope>NUCLEOTIDE SEQUENCE [LARGE SCALE GENOMIC DNA]</scope>
    <source>
        <strain>1330</strain>
    </source>
</reference>
<reference key="2">
    <citation type="journal article" date="2011" name="J. Bacteriol.">
        <title>Revised genome sequence of Brucella suis 1330.</title>
        <authorList>
            <person name="Tae H."/>
            <person name="Shallom S."/>
            <person name="Settlage R."/>
            <person name="Preston D."/>
            <person name="Adams L.G."/>
            <person name="Garner H.R."/>
        </authorList>
    </citation>
    <scope>NUCLEOTIDE SEQUENCE [LARGE SCALE GENOMIC DNA]</scope>
    <source>
        <strain>1330</strain>
    </source>
</reference>
<gene>
    <name type="primary">hisS</name>
    <name type="ordered locus">BRA0187</name>
    <name type="ordered locus">BS1330_II0184</name>
</gene>
<dbReference type="EC" id="6.1.1.21"/>
<dbReference type="EMBL" id="AE014292">
    <property type="protein sequence ID" value="AAN33394.1"/>
    <property type="molecule type" value="Genomic_DNA"/>
</dbReference>
<dbReference type="EMBL" id="CP002998">
    <property type="protein sequence ID" value="AEM19671.1"/>
    <property type="molecule type" value="Genomic_DNA"/>
</dbReference>
<dbReference type="RefSeq" id="WP_004690017.1">
    <property type="nucleotide sequence ID" value="NZ_KN046805.1"/>
</dbReference>
<dbReference type="SMR" id="Q8FX93"/>
<dbReference type="GeneID" id="55591903"/>
<dbReference type="KEGG" id="bms:BRA0187"/>
<dbReference type="KEGG" id="bsi:BS1330_II0184"/>
<dbReference type="PATRIC" id="fig|204722.22.peg.2973"/>
<dbReference type="HOGENOM" id="CLU_025113_3_2_5"/>
<dbReference type="PhylomeDB" id="Q8FX93"/>
<dbReference type="Proteomes" id="UP000007104">
    <property type="component" value="Chromosome II"/>
</dbReference>
<dbReference type="GO" id="GO:0005737">
    <property type="term" value="C:cytoplasm"/>
    <property type="evidence" value="ECO:0007669"/>
    <property type="project" value="UniProtKB-SubCell"/>
</dbReference>
<dbReference type="GO" id="GO:0005524">
    <property type="term" value="F:ATP binding"/>
    <property type="evidence" value="ECO:0007669"/>
    <property type="project" value="UniProtKB-UniRule"/>
</dbReference>
<dbReference type="GO" id="GO:0004821">
    <property type="term" value="F:histidine-tRNA ligase activity"/>
    <property type="evidence" value="ECO:0007669"/>
    <property type="project" value="UniProtKB-UniRule"/>
</dbReference>
<dbReference type="GO" id="GO:0006427">
    <property type="term" value="P:histidyl-tRNA aminoacylation"/>
    <property type="evidence" value="ECO:0007669"/>
    <property type="project" value="UniProtKB-UniRule"/>
</dbReference>
<dbReference type="CDD" id="cd00773">
    <property type="entry name" value="HisRS-like_core"/>
    <property type="match status" value="1"/>
</dbReference>
<dbReference type="CDD" id="cd00859">
    <property type="entry name" value="HisRS_anticodon"/>
    <property type="match status" value="1"/>
</dbReference>
<dbReference type="Gene3D" id="3.40.50.800">
    <property type="entry name" value="Anticodon-binding domain"/>
    <property type="match status" value="1"/>
</dbReference>
<dbReference type="Gene3D" id="3.30.930.10">
    <property type="entry name" value="Bira Bifunctional Protein, Domain 2"/>
    <property type="match status" value="1"/>
</dbReference>
<dbReference type="HAMAP" id="MF_00127">
    <property type="entry name" value="His_tRNA_synth"/>
    <property type="match status" value="1"/>
</dbReference>
<dbReference type="InterPro" id="IPR006195">
    <property type="entry name" value="aa-tRNA-synth_II"/>
</dbReference>
<dbReference type="InterPro" id="IPR045864">
    <property type="entry name" value="aa-tRNA-synth_II/BPL/LPL"/>
</dbReference>
<dbReference type="InterPro" id="IPR004154">
    <property type="entry name" value="Anticodon-bd"/>
</dbReference>
<dbReference type="InterPro" id="IPR036621">
    <property type="entry name" value="Anticodon-bd_dom_sf"/>
</dbReference>
<dbReference type="InterPro" id="IPR015807">
    <property type="entry name" value="His-tRNA-ligase"/>
</dbReference>
<dbReference type="InterPro" id="IPR041715">
    <property type="entry name" value="HisRS-like_core"/>
</dbReference>
<dbReference type="InterPro" id="IPR004516">
    <property type="entry name" value="HisRS/HisZ"/>
</dbReference>
<dbReference type="InterPro" id="IPR033656">
    <property type="entry name" value="HisRS_anticodon"/>
</dbReference>
<dbReference type="NCBIfam" id="TIGR00442">
    <property type="entry name" value="hisS"/>
    <property type="match status" value="1"/>
</dbReference>
<dbReference type="PANTHER" id="PTHR11476:SF7">
    <property type="entry name" value="HISTIDINE--TRNA LIGASE"/>
    <property type="match status" value="1"/>
</dbReference>
<dbReference type="PANTHER" id="PTHR11476">
    <property type="entry name" value="HISTIDYL-TRNA SYNTHETASE"/>
    <property type="match status" value="1"/>
</dbReference>
<dbReference type="Pfam" id="PF03129">
    <property type="entry name" value="HGTP_anticodon"/>
    <property type="match status" value="1"/>
</dbReference>
<dbReference type="Pfam" id="PF13393">
    <property type="entry name" value="tRNA-synt_His"/>
    <property type="match status" value="1"/>
</dbReference>
<dbReference type="PIRSF" id="PIRSF001549">
    <property type="entry name" value="His-tRNA_synth"/>
    <property type="match status" value="1"/>
</dbReference>
<dbReference type="SUPFAM" id="SSF52954">
    <property type="entry name" value="Class II aaRS ABD-related"/>
    <property type="match status" value="1"/>
</dbReference>
<dbReference type="SUPFAM" id="SSF55681">
    <property type="entry name" value="Class II aaRS and biotin synthetases"/>
    <property type="match status" value="1"/>
</dbReference>
<dbReference type="PROSITE" id="PS50862">
    <property type="entry name" value="AA_TRNA_LIGASE_II"/>
    <property type="match status" value="1"/>
</dbReference>
<organism>
    <name type="scientific">Brucella suis biovar 1 (strain 1330)</name>
    <dbReference type="NCBI Taxonomy" id="204722"/>
    <lineage>
        <taxon>Bacteria</taxon>
        <taxon>Pseudomonadati</taxon>
        <taxon>Pseudomonadota</taxon>
        <taxon>Alphaproteobacteria</taxon>
        <taxon>Hyphomicrobiales</taxon>
        <taxon>Brucellaceae</taxon>
        <taxon>Brucella/Ochrobactrum group</taxon>
        <taxon>Brucella</taxon>
    </lineage>
</organism>
<sequence length="502" mass="55179">MADKADKMKARLPRGFVDRVPDDLRAAEKMMATIREVYDLYGFEPVETPLVEYTDALGKFLPDQDRPNEGVFSFQDDDEQWLSLRYDLTAPLARYVAENFETLPKPYRSYRNGWVFRNEKPGPGRFRQFMQFDADTVGAPNVSADAEMCMMMADTLERLGIQRGDYAIRVNNRKVLDGVLDAIGLEGEGNAAKRLNVLRAIDKLDKFGPEGVRLLLGKGRLDESGDFTKGAQLPEAAIEKVLAFTAAGGADGAQTIANLQAVVAGNAEGEEGVQELADMQALFFAGGYEGRVKIDPSVVRGLEYYTGPVFEAELLFDVTNEDGQKVVFGSVGGGGRYDGLVSRFRGEPVPATGFSIGVSRLMTALKNLGKLDVSDTVGPVVVLVMDKDTQNLGRYQKMVSDLRKAGIRAEMYVGGSGMKAQMKYADRRAAPCVVIQGSQEREAGEVQIKDLVEGKRLSAEIEDNVTWRESRPAQITVREDGLVDAVREILDAQARDRAEQSK</sequence>
<keyword id="KW-0030">Aminoacyl-tRNA synthetase</keyword>
<keyword id="KW-0067">ATP-binding</keyword>
<keyword id="KW-0963">Cytoplasm</keyword>
<keyword id="KW-0436">Ligase</keyword>
<keyword id="KW-0547">Nucleotide-binding</keyword>
<keyword id="KW-0648">Protein biosynthesis</keyword>
<comment type="catalytic activity">
    <reaction>
        <text>tRNA(His) + L-histidine + ATP = L-histidyl-tRNA(His) + AMP + diphosphate + H(+)</text>
        <dbReference type="Rhea" id="RHEA:17313"/>
        <dbReference type="Rhea" id="RHEA-COMP:9665"/>
        <dbReference type="Rhea" id="RHEA-COMP:9689"/>
        <dbReference type="ChEBI" id="CHEBI:15378"/>
        <dbReference type="ChEBI" id="CHEBI:30616"/>
        <dbReference type="ChEBI" id="CHEBI:33019"/>
        <dbReference type="ChEBI" id="CHEBI:57595"/>
        <dbReference type="ChEBI" id="CHEBI:78442"/>
        <dbReference type="ChEBI" id="CHEBI:78527"/>
        <dbReference type="ChEBI" id="CHEBI:456215"/>
        <dbReference type="EC" id="6.1.1.21"/>
    </reaction>
</comment>
<comment type="subunit">
    <text evidence="1">Homodimer.</text>
</comment>
<comment type="subcellular location">
    <subcellularLocation>
        <location evidence="1">Cytoplasm</location>
    </subcellularLocation>
</comment>
<comment type="similarity">
    <text evidence="2">Belongs to the class-II aminoacyl-tRNA synthetase family.</text>
</comment>
<name>SYH_BRUSU</name>
<accession>Q8FX93</accession>
<accession>G0KF27</accession>
<proteinExistence type="inferred from homology"/>
<feature type="chain" id="PRO_0000136125" description="Histidine--tRNA ligase">
    <location>
        <begin position="1"/>
        <end position="502"/>
    </location>
</feature>
<protein>
    <recommendedName>
        <fullName>Histidine--tRNA ligase</fullName>
        <ecNumber>6.1.1.21</ecNumber>
    </recommendedName>
    <alternativeName>
        <fullName>Histidyl-tRNA synthetase</fullName>
        <shortName>HisRS</shortName>
    </alternativeName>
</protein>
<evidence type="ECO:0000250" key="1"/>
<evidence type="ECO:0000305" key="2"/>